<protein>
    <recommendedName>
        <fullName>ATP synthase subunit delta', mitochondrial</fullName>
    </recommendedName>
    <alternativeName>
        <fullName>F-ATPase delta' subunit</fullName>
    </alternativeName>
</protein>
<comment type="function">
    <text>Mitochondrial membrane ATP synthase (F(1)F(0) ATP synthase or Complex V) produces ATP from ADP in the presence of a proton gradient across the membrane which is generated by electron transport complexes of the respiratory chain. F-type ATPases consist of two structural domains, F(1) - containing the extramembraneous catalytic core, and F(0) - containing the membrane proton channel, linked together by a central stalk and a peripheral stalk. During catalysis, ATP turnover in the catalytic domain of F(1) is coupled via a rotary mechanism of the central stalk subunits to proton translocation. Part of the complex F(1) domain and of the central stalk which is part of the complex rotary element. Rotation of the central stalk against the surrounding alpha(3)beta(3) subunits leads to hydrolysis of ATP in three separate catalytic sites on the beta subunits.</text>
</comment>
<comment type="subunit">
    <text>F-type ATPases have 2 components, CF(1) - the catalytic core - and CF(0) - the membrane proton channel. CF(1) has five subunits: alpha(3), beta(3), gamma(1), delta(1), epsilon(1). CF(0) has three main subunits: a, b and c.</text>
</comment>
<comment type="subcellular location">
    <subcellularLocation>
        <location>Mitochondrion</location>
    </subcellularLocation>
    <subcellularLocation>
        <location>Mitochondrion inner membrane</location>
    </subcellularLocation>
</comment>
<comment type="similarity">
    <text evidence="2">Belongs to the ATPase epsilon chain family.</text>
</comment>
<dbReference type="EMBL" id="D10660">
    <property type="protein sequence ID" value="BAA01511.1"/>
    <property type="molecule type" value="mRNA"/>
</dbReference>
<dbReference type="PIR" id="A41740">
    <property type="entry name" value="A41740"/>
</dbReference>
<dbReference type="SMR" id="Q40089"/>
<dbReference type="GO" id="GO:0005743">
    <property type="term" value="C:mitochondrial inner membrane"/>
    <property type="evidence" value="ECO:0007669"/>
    <property type="project" value="UniProtKB-SubCell"/>
</dbReference>
<dbReference type="GO" id="GO:0045259">
    <property type="term" value="C:proton-transporting ATP synthase complex"/>
    <property type="evidence" value="ECO:0007669"/>
    <property type="project" value="UniProtKB-KW"/>
</dbReference>
<dbReference type="GO" id="GO:0046933">
    <property type="term" value="F:proton-transporting ATP synthase activity, rotational mechanism"/>
    <property type="evidence" value="ECO:0007669"/>
    <property type="project" value="InterPro"/>
</dbReference>
<dbReference type="CDD" id="cd12152">
    <property type="entry name" value="F1-ATPase_delta"/>
    <property type="match status" value="1"/>
</dbReference>
<dbReference type="FunFam" id="2.60.15.10:FF:000005">
    <property type="entry name" value="ATP synthase delta"/>
    <property type="match status" value="1"/>
</dbReference>
<dbReference type="Gene3D" id="1.20.5.440">
    <property type="entry name" value="ATP synthase delta/epsilon subunit, C-terminal domain"/>
    <property type="match status" value="1"/>
</dbReference>
<dbReference type="Gene3D" id="2.60.15.10">
    <property type="entry name" value="F0F1 ATP synthase delta/epsilon subunit, N-terminal"/>
    <property type="match status" value="1"/>
</dbReference>
<dbReference type="HAMAP" id="MF_00530">
    <property type="entry name" value="ATP_synth_epsil_bac"/>
    <property type="match status" value="1"/>
</dbReference>
<dbReference type="InterPro" id="IPR001469">
    <property type="entry name" value="ATP_synth_F1_dsu/esu"/>
</dbReference>
<dbReference type="InterPro" id="IPR020546">
    <property type="entry name" value="ATP_synth_F1_dsu/esu_N"/>
</dbReference>
<dbReference type="InterPro" id="IPR036771">
    <property type="entry name" value="ATPsynth_dsu/esu_N"/>
</dbReference>
<dbReference type="PANTHER" id="PTHR13822">
    <property type="entry name" value="ATP SYNTHASE DELTA/EPSILON CHAIN"/>
    <property type="match status" value="1"/>
</dbReference>
<dbReference type="PANTHER" id="PTHR13822:SF7">
    <property type="entry name" value="ATP SYNTHASE SUBUNIT DELTA, MITOCHONDRIAL"/>
    <property type="match status" value="1"/>
</dbReference>
<dbReference type="Pfam" id="PF02823">
    <property type="entry name" value="ATP-synt_DE_N"/>
    <property type="match status" value="1"/>
</dbReference>
<dbReference type="SUPFAM" id="SSF51344">
    <property type="entry name" value="Epsilon subunit of F1F0-ATP synthase N-terminal domain"/>
    <property type="match status" value="1"/>
</dbReference>
<keyword id="KW-0066">ATP synthesis</keyword>
<keyword id="KW-0139">CF(1)</keyword>
<keyword id="KW-0903">Direct protein sequencing</keyword>
<keyword id="KW-0375">Hydrogen ion transport</keyword>
<keyword id="KW-0406">Ion transport</keyword>
<keyword id="KW-0472">Membrane</keyword>
<keyword id="KW-0496">Mitochondrion</keyword>
<keyword id="KW-0999">Mitochondrion inner membrane</keyword>
<keyword id="KW-0809">Transit peptide</keyword>
<keyword id="KW-0813">Transport</keyword>
<organism>
    <name type="scientific">Ipomoea batatas</name>
    <name type="common">Sweet potato</name>
    <name type="synonym">Convolvulus batatas</name>
    <dbReference type="NCBI Taxonomy" id="4120"/>
    <lineage>
        <taxon>Eukaryota</taxon>
        <taxon>Viridiplantae</taxon>
        <taxon>Streptophyta</taxon>
        <taxon>Embryophyta</taxon>
        <taxon>Tracheophyta</taxon>
        <taxon>Spermatophyta</taxon>
        <taxon>Magnoliopsida</taxon>
        <taxon>eudicotyledons</taxon>
        <taxon>Gunneridae</taxon>
        <taxon>Pentapetalae</taxon>
        <taxon>asterids</taxon>
        <taxon>lamiids</taxon>
        <taxon>Solanales</taxon>
        <taxon>Convolvulaceae</taxon>
        <taxon>Ipomoeeae</taxon>
        <taxon>Ipomoea</taxon>
    </lineage>
</organism>
<sequence>MFRHSSRLLARATTMGWRRPFSTDLPAETAADSTFVEAWKKLIPNVDPPKTPSAYMAPRPATPSSIPSKLTVNFVLPYSSELAGKEVDMVIIPATTGQMGVLPGHVATIAELKPGVMSVHEGNDVSKYFVSGGFAFIHANSFADIIAVEAVPLDRIDANLVQKGLAEFTQKLNTASTDVEKAEAQIGVDVHSALNAALTG</sequence>
<reference key="1">
    <citation type="journal article" date="1992" name="J. Biol. Chem.">
        <title>The delta'-subunit of higher plant six-subunit mitochondrial F1-ATPase is homologous to the delta-subunit of animal mitochondrial F1-ATPase.</title>
        <authorList>
            <person name="Morikame A."/>
            <person name="Aiso K."/>
            <person name="Asahi T."/>
            <person name="Nakamura K."/>
        </authorList>
    </citation>
    <scope>NUCLEOTIDE SEQUENCE [MRNA]</scope>
</reference>
<reference key="2">
    <citation type="journal article" date="1989" name="J. Biol. Chem.">
        <title>Correspondence of minor subunits of plant mitochondrial F1ATPase to F1F0ATPase subunits of other organisms.</title>
        <authorList>
            <person name="Kimura T."/>
            <person name="Nakamura K."/>
            <person name="Kajiura H."/>
            <person name="Hattori H."/>
            <person name="Nelson N."/>
            <person name="Asahi T."/>
        </authorList>
    </citation>
    <scope>PROTEIN SEQUENCE OF 22-56</scope>
</reference>
<proteinExistence type="evidence at protein level"/>
<feature type="transit peptide" description="Mitochondrion" evidence="1">
    <location>
        <begin position="1"/>
        <end position="21"/>
    </location>
</feature>
<feature type="chain" id="PRO_0000002658" description="ATP synthase subunit delta', mitochondrial">
    <location>
        <begin position="22"/>
        <end position="200"/>
    </location>
</feature>
<name>ATP4_IPOBA</name>
<accession>Q40089</accession>
<evidence type="ECO:0000269" key="1">
    <source>
    </source>
</evidence>
<evidence type="ECO:0000305" key="2"/>